<name>RFCS2_PYRAE</name>
<evidence type="ECO:0000255" key="1">
    <source>
        <dbReference type="HAMAP-Rule" id="MF_01509"/>
    </source>
</evidence>
<accession>Q8ZWS2</accession>
<reference key="1">
    <citation type="journal article" date="2002" name="Proc. Natl. Acad. Sci. U.S.A.">
        <title>Genome sequence of the hyperthermophilic crenarchaeon Pyrobaculum aerophilum.</title>
        <authorList>
            <person name="Fitz-Gibbon S.T."/>
            <person name="Ladner H."/>
            <person name="Kim U.-J."/>
            <person name="Stetter K.O."/>
            <person name="Simon M.I."/>
            <person name="Miller J.H."/>
        </authorList>
    </citation>
    <scope>NUCLEOTIDE SEQUENCE [LARGE SCALE GENOMIC DNA]</scope>
    <source>
        <strain>ATCC 51768 / DSM 7523 / JCM 9630 / CIP 104966 / NBRC 100827 / IM2</strain>
    </source>
</reference>
<proteinExistence type="inferred from homology"/>
<feature type="chain" id="PRO_0000135982" description="Replication factor C small subunit 2">
    <location>
        <begin position="1"/>
        <end position="319"/>
    </location>
</feature>
<feature type="binding site" evidence="1">
    <location>
        <begin position="44"/>
        <end position="51"/>
    </location>
    <ligand>
        <name>ATP</name>
        <dbReference type="ChEBI" id="CHEBI:30616"/>
    </ligand>
</feature>
<keyword id="KW-0067">ATP-binding</keyword>
<keyword id="KW-0235">DNA replication</keyword>
<keyword id="KW-0547">Nucleotide-binding</keyword>
<keyword id="KW-1185">Reference proteome</keyword>
<organism>
    <name type="scientific">Pyrobaculum aerophilum (strain ATCC 51768 / DSM 7523 / JCM 9630 / CIP 104966 / NBRC 100827 / IM2)</name>
    <dbReference type="NCBI Taxonomy" id="178306"/>
    <lineage>
        <taxon>Archaea</taxon>
        <taxon>Thermoproteota</taxon>
        <taxon>Thermoprotei</taxon>
        <taxon>Thermoproteales</taxon>
        <taxon>Thermoproteaceae</taxon>
        <taxon>Pyrobaculum</taxon>
    </lineage>
</organism>
<comment type="function">
    <text evidence="1">Part of the RFC clamp loader complex which loads the PCNA sliding clamp onto DNA.</text>
</comment>
<comment type="subunit">
    <text evidence="1">Heteromultimer composed of small subunits (RfcS) and large subunits (RfcL).</text>
</comment>
<comment type="similarity">
    <text evidence="1">Belongs to the activator 1 small subunits family. RfcS subfamily.</text>
</comment>
<dbReference type="EMBL" id="AE009441">
    <property type="protein sequence ID" value="AAL63627.1"/>
    <property type="molecule type" value="Genomic_DNA"/>
</dbReference>
<dbReference type="RefSeq" id="WP_011008100.1">
    <property type="nucleotide sequence ID" value="NC_003364.1"/>
</dbReference>
<dbReference type="SMR" id="Q8ZWS2"/>
<dbReference type="FunCoup" id="Q8ZWS2">
    <property type="interactions" value="118"/>
</dbReference>
<dbReference type="STRING" id="178306.PAE1646"/>
<dbReference type="EnsemblBacteria" id="AAL63627">
    <property type="protein sequence ID" value="AAL63627"/>
    <property type="gene ID" value="PAE1646"/>
</dbReference>
<dbReference type="GeneID" id="1465876"/>
<dbReference type="KEGG" id="pai:PAE1646"/>
<dbReference type="PATRIC" id="fig|178306.9.peg.1217"/>
<dbReference type="eggNOG" id="arCOG00469">
    <property type="taxonomic scope" value="Archaea"/>
</dbReference>
<dbReference type="HOGENOM" id="CLU_042324_2_1_2"/>
<dbReference type="InParanoid" id="Q8ZWS2"/>
<dbReference type="Proteomes" id="UP000002439">
    <property type="component" value="Chromosome"/>
</dbReference>
<dbReference type="GO" id="GO:0005663">
    <property type="term" value="C:DNA replication factor C complex"/>
    <property type="evidence" value="ECO:0000318"/>
    <property type="project" value="GO_Central"/>
</dbReference>
<dbReference type="GO" id="GO:0005524">
    <property type="term" value="F:ATP binding"/>
    <property type="evidence" value="ECO:0007669"/>
    <property type="project" value="UniProtKB-UniRule"/>
</dbReference>
<dbReference type="GO" id="GO:0016887">
    <property type="term" value="F:ATP hydrolysis activity"/>
    <property type="evidence" value="ECO:0007669"/>
    <property type="project" value="InterPro"/>
</dbReference>
<dbReference type="GO" id="GO:0003677">
    <property type="term" value="F:DNA binding"/>
    <property type="evidence" value="ECO:0007669"/>
    <property type="project" value="InterPro"/>
</dbReference>
<dbReference type="GO" id="GO:0003689">
    <property type="term" value="F:DNA clamp loader activity"/>
    <property type="evidence" value="ECO:0007669"/>
    <property type="project" value="UniProtKB-UniRule"/>
</dbReference>
<dbReference type="GO" id="GO:0006281">
    <property type="term" value="P:DNA repair"/>
    <property type="evidence" value="ECO:0000318"/>
    <property type="project" value="GO_Central"/>
</dbReference>
<dbReference type="GO" id="GO:0006261">
    <property type="term" value="P:DNA-templated DNA replication"/>
    <property type="evidence" value="ECO:0000318"/>
    <property type="project" value="GO_Central"/>
</dbReference>
<dbReference type="CDD" id="cd00009">
    <property type="entry name" value="AAA"/>
    <property type="match status" value="1"/>
</dbReference>
<dbReference type="CDD" id="cd18140">
    <property type="entry name" value="HLD_clamp_RFC"/>
    <property type="match status" value="1"/>
</dbReference>
<dbReference type="FunFam" id="1.10.8.60:FF:000012">
    <property type="entry name" value="Replication factor C subunit 4"/>
    <property type="match status" value="1"/>
</dbReference>
<dbReference type="FunFam" id="3.40.50.300:FF:000129">
    <property type="entry name" value="Replication factor C subunit 5"/>
    <property type="match status" value="1"/>
</dbReference>
<dbReference type="Gene3D" id="1.10.8.60">
    <property type="match status" value="1"/>
</dbReference>
<dbReference type="Gene3D" id="1.20.272.10">
    <property type="match status" value="1"/>
</dbReference>
<dbReference type="Gene3D" id="3.40.50.300">
    <property type="entry name" value="P-loop containing nucleotide triphosphate hydrolases"/>
    <property type="match status" value="1"/>
</dbReference>
<dbReference type="HAMAP" id="MF_01509">
    <property type="entry name" value="RfcS"/>
    <property type="match status" value="1"/>
</dbReference>
<dbReference type="InterPro" id="IPR003593">
    <property type="entry name" value="AAA+_ATPase"/>
</dbReference>
<dbReference type="InterPro" id="IPR003959">
    <property type="entry name" value="ATPase_AAA_core"/>
</dbReference>
<dbReference type="InterPro" id="IPR008921">
    <property type="entry name" value="DNA_pol3_clamp-load_cplx_C"/>
</dbReference>
<dbReference type="InterPro" id="IPR050238">
    <property type="entry name" value="DNA_Rep/Repair_Clamp_Loader"/>
</dbReference>
<dbReference type="InterPro" id="IPR027417">
    <property type="entry name" value="P-loop_NTPase"/>
</dbReference>
<dbReference type="InterPro" id="IPR023748">
    <property type="entry name" value="Rep_factor-C_ssu_arc"/>
</dbReference>
<dbReference type="InterPro" id="IPR013748">
    <property type="entry name" value="Rep_factorC_C"/>
</dbReference>
<dbReference type="InterPro" id="IPR047854">
    <property type="entry name" value="RFC_lid"/>
</dbReference>
<dbReference type="NCBIfam" id="NF001679">
    <property type="entry name" value="PRK00440.1"/>
    <property type="match status" value="1"/>
</dbReference>
<dbReference type="PANTHER" id="PTHR11669">
    <property type="entry name" value="REPLICATION FACTOR C / DNA POLYMERASE III GAMMA-TAU SUBUNIT"/>
    <property type="match status" value="1"/>
</dbReference>
<dbReference type="PANTHER" id="PTHR11669:SF20">
    <property type="entry name" value="REPLICATION FACTOR C SUBUNIT 4"/>
    <property type="match status" value="1"/>
</dbReference>
<dbReference type="Pfam" id="PF00004">
    <property type="entry name" value="AAA"/>
    <property type="match status" value="1"/>
</dbReference>
<dbReference type="Pfam" id="PF21960">
    <property type="entry name" value="RCF1-5-like_lid"/>
    <property type="match status" value="1"/>
</dbReference>
<dbReference type="Pfam" id="PF08542">
    <property type="entry name" value="Rep_fac_C"/>
    <property type="match status" value="1"/>
</dbReference>
<dbReference type="SMART" id="SM00382">
    <property type="entry name" value="AAA"/>
    <property type="match status" value="1"/>
</dbReference>
<dbReference type="SUPFAM" id="SSF52540">
    <property type="entry name" value="P-loop containing nucleoside triphosphate hydrolases"/>
    <property type="match status" value="1"/>
</dbReference>
<dbReference type="SUPFAM" id="SSF48019">
    <property type="entry name" value="post-AAA+ oligomerization domain-like"/>
    <property type="match status" value="1"/>
</dbReference>
<protein>
    <recommendedName>
        <fullName evidence="1">Replication factor C small subunit 2</fullName>
        <shortName evidence="1">RFC small subunit 2</shortName>
    </recommendedName>
    <alternativeName>
        <fullName evidence="1">Clamp loader small subunit 2</fullName>
    </alternativeName>
</protein>
<sequence>MSELFWFEKYRPRSFDEVVDLEEVKARLRQFVKAGNMPHLLFYGPPGTGKTTMALVLARELYGEYWRENTLELNASDERGINVIRERVKEFARTAPVGKAPFKLVILDEADNMTSDAQQALRRIMEIYAQNTRFILLANYVSGIIEPIQSRTVMIRFSPLPKEAVFARLRYIAENEGVKVSDDALEAIYEFTQGDMRRAINALQIAATVSKAVTEEVVAKALGMVSPRLLRETLYEAVKGSFGKAATQIYGFVADGGVGELEIIKQIHREMLRLDVQEYVKPEIAYIIAEAHYAILRGAHGLTQIYGALAKVRRLLKSV</sequence>
<gene>
    <name evidence="1" type="primary">rfcS2</name>
    <name type="ordered locus">PAE1646</name>
</gene>